<protein>
    <recommendedName>
        <fullName evidence="1">UPF0397 protein SSA_0592</fullName>
    </recommendedName>
</protein>
<sequence length="180" mass="19324">MKNNTIRNVVATGIGAALFVVIGMINIPTPVPNTSIQLQYPLQALFSVIFGPIVGFLMGFIGHAIKDAMSGGGLWWFWIAGSGVFGLLVGFFRKFFRVEEGKFEVKDIIRFNLIQFGANAIAWLIGPIGDVIVSGEPVNKVIAQSIVAILVNSATVAVIGTVLLTAYARTRTRAGSLKKD</sequence>
<feature type="chain" id="PRO_1000087878" description="UPF0397 protein SSA_0592">
    <location>
        <begin position="1"/>
        <end position="180"/>
    </location>
</feature>
<feature type="transmembrane region" description="Helical" evidence="1">
    <location>
        <begin position="9"/>
        <end position="29"/>
    </location>
</feature>
<feature type="transmembrane region" description="Helical" evidence="1">
    <location>
        <begin position="45"/>
        <end position="65"/>
    </location>
</feature>
<feature type="transmembrane region" description="Helical" evidence="1">
    <location>
        <begin position="72"/>
        <end position="92"/>
    </location>
</feature>
<feature type="transmembrane region" description="Helical" evidence="1">
    <location>
        <begin position="113"/>
        <end position="133"/>
    </location>
</feature>
<feature type="transmembrane region" description="Helical" evidence="1">
    <location>
        <begin position="146"/>
        <end position="166"/>
    </location>
</feature>
<evidence type="ECO:0000255" key="1">
    <source>
        <dbReference type="HAMAP-Rule" id="MF_01572"/>
    </source>
</evidence>
<reference key="1">
    <citation type="journal article" date="2007" name="J. Bacteriol.">
        <title>Genome of the opportunistic pathogen Streptococcus sanguinis.</title>
        <authorList>
            <person name="Xu P."/>
            <person name="Alves J.M."/>
            <person name="Kitten T."/>
            <person name="Brown A."/>
            <person name="Chen Z."/>
            <person name="Ozaki L.S."/>
            <person name="Manque P."/>
            <person name="Ge X."/>
            <person name="Serrano M.G."/>
            <person name="Puiu D."/>
            <person name="Hendricks S."/>
            <person name="Wang Y."/>
            <person name="Chaplin M.D."/>
            <person name="Akan D."/>
            <person name="Paik S."/>
            <person name="Peterson D.L."/>
            <person name="Macrina F.L."/>
            <person name="Buck G.A."/>
        </authorList>
    </citation>
    <scope>NUCLEOTIDE SEQUENCE [LARGE SCALE GENOMIC DNA]</scope>
    <source>
        <strain>SK36</strain>
    </source>
</reference>
<comment type="subcellular location">
    <subcellularLocation>
        <location evidence="1">Cell membrane</location>
        <topology evidence="1">Multi-pass membrane protein</topology>
    </subcellularLocation>
</comment>
<comment type="similarity">
    <text evidence="1">Belongs to the UPF0397 family.</text>
</comment>
<keyword id="KW-1003">Cell membrane</keyword>
<keyword id="KW-0472">Membrane</keyword>
<keyword id="KW-1185">Reference proteome</keyword>
<keyword id="KW-0812">Transmembrane</keyword>
<keyword id="KW-1133">Transmembrane helix</keyword>
<gene>
    <name type="ordered locus">SSA_0592</name>
</gene>
<dbReference type="EMBL" id="CP000387">
    <property type="protein sequence ID" value="ABN44035.1"/>
    <property type="molecule type" value="Genomic_DNA"/>
</dbReference>
<dbReference type="RefSeq" id="WP_002913830.1">
    <property type="nucleotide sequence ID" value="NC_009009.1"/>
</dbReference>
<dbReference type="RefSeq" id="YP_001034585.1">
    <property type="nucleotide sequence ID" value="NC_009009.1"/>
</dbReference>
<dbReference type="STRING" id="388919.SSA_0592"/>
<dbReference type="GeneID" id="48425023"/>
<dbReference type="KEGG" id="ssa:SSA_0592"/>
<dbReference type="PATRIC" id="fig|388919.9.peg.572"/>
<dbReference type="eggNOG" id="COG4720">
    <property type="taxonomic scope" value="Bacteria"/>
</dbReference>
<dbReference type="HOGENOM" id="CLU_120023_0_0_9"/>
<dbReference type="OrthoDB" id="4550662at2"/>
<dbReference type="Proteomes" id="UP000002148">
    <property type="component" value="Chromosome"/>
</dbReference>
<dbReference type="GO" id="GO:0005886">
    <property type="term" value="C:plasma membrane"/>
    <property type="evidence" value="ECO:0007669"/>
    <property type="project" value="UniProtKB-SubCell"/>
</dbReference>
<dbReference type="Gene3D" id="1.10.1760.20">
    <property type="match status" value="1"/>
</dbReference>
<dbReference type="HAMAP" id="MF_01572">
    <property type="entry name" value="UPF0397"/>
    <property type="match status" value="1"/>
</dbReference>
<dbReference type="InterPro" id="IPR009825">
    <property type="entry name" value="ECF_substrate-spec-like"/>
</dbReference>
<dbReference type="InterPro" id="IPR022914">
    <property type="entry name" value="UPF0397"/>
</dbReference>
<dbReference type="NCBIfam" id="NF010182">
    <property type="entry name" value="PRK13661.1"/>
    <property type="match status" value="1"/>
</dbReference>
<dbReference type="PANTHER" id="PTHR37815">
    <property type="entry name" value="UPF0397 PROTEIN BC_2624-RELATED"/>
    <property type="match status" value="1"/>
</dbReference>
<dbReference type="PANTHER" id="PTHR37815:SF3">
    <property type="entry name" value="UPF0397 PROTEIN SPR0429"/>
    <property type="match status" value="1"/>
</dbReference>
<dbReference type="Pfam" id="PF07155">
    <property type="entry name" value="ECF-ribofla_trS"/>
    <property type="match status" value="1"/>
</dbReference>
<organism>
    <name type="scientific">Streptococcus sanguinis (strain SK36)</name>
    <dbReference type="NCBI Taxonomy" id="388919"/>
    <lineage>
        <taxon>Bacteria</taxon>
        <taxon>Bacillati</taxon>
        <taxon>Bacillota</taxon>
        <taxon>Bacilli</taxon>
        <taxon>Lactobacillales</taxon>
        <taxon>Streptococcaceae</taxon>
        <taxon>Streptococcus</taxon>
    </lineage>
</organism>
<proteinExistence type="inferred from homology"/>
<name>Y592_STRSV</name>
<accession>A3CLI0</accession>